<sequence>MIIVIIFLVIYFNNQLYMCVSSTCVIQWCAIQCKRKEANGIGTCKPRPNQGKIQYRKLKEECHCVYKCS</sequence>
<protein>
    <recommendedName>
        <fullName>Defensin-like protein 166</fullName>
    </recommendedName>
</protein>
<proteinExistence type="uncertain"/>
<reference key="1">
    <citation type="journal article" date="2000" name="Nature">
        <title>Sequence and analysis of chromosome 1 of the plant Arabidopsis thaliana.</title>
        <authorList>
            <person name="Theologis A."/>
            <person name="Ecker J.R."/>
            <person name="Palm C.J."/>
            <person name="Federspiel N.A."/>
            <person name="Kaul S."/>
            <person name="White O."/>
            <person name="Alonso J."/>
            <person name="Altafi H."/>
            <person name="Araujo R."/>
            <person name="Bowman C.L."/>
            <person name="Brooks S.Y."/>
            <person name="Buehler E."/>
            <person name="Chan A."/>
            <person name="Chao Q."/>
            <person name="Chen H."/>
            <person name="Cheuk R.F."/>
            <person name="Chin C.W."/>
            <person name="Chung M.K."/>
            <person name="Conn L."/>
            <person name="Conway A.B."/>
            <person name="Conway A.R."/>
            <person name="Creasy T.H."/>
            <person name="Dewar K."/>
            <person name="Dunn P."/>
            <person name="Etgu P."/>
            <person name="Feldblyum T.V."/>
            <person name="Feng J.-D."/>
            <person name="Fong B."/>
            <person name="Fujii C.Y."/>
            <person name="Gill J.E."/>
            <person name="Goldsmith A.D."/>
            <person name="Haas B."/>
            <person name="Hansen N.F."/>
            <person name="Hughes B."/>
            <person name="Huizar L."/>
            <person name="Hunter J.L."/>
            <person name="Jenkins J."/>
            <person name="Johnson-Hopson C."/>
            <person name="Khan S."/>
            <person name="Khaykin E."/>
            <person name="Kim C.J."/>
            <person name="Koo H.L."/>
            <person name="Kremenetskaia I."/>
            <person name="Kurtz D.B."/>
            <person name="Kwan A."/>
            <person name="Lam B."/>
            <person name="Langin-Hooper S."/>
            <person name="Lee A."/>
            <person name="Lee J.M."/>
            <person name="Lenz C.A."/>
            <person name="Li J.H."/>
            <person name="Li Y.-P."/>
            <person name="Lin X."/>
            <person name="Liu S.X."/>
            <person name="Liu Z.A."/>
            <person name="Luros J.S."/>
            <person name="Maiti R."/>
            <person name="Marziali A."/>
            <person name="Militscher J."/>
            <person name="Miranda M."/>
            <person name="Nguyen M."/>
            <person name="Nierman W.C."/>
            <person name="Osborne B.I."/>
            <person name="Pai G."/>
            <person name="Peterson J."/>
            <person name="Pham P.K."/>
            <person name="Rizzo M."/>
            <person name="Rooney T."/>
            <person name="Rowley D."/>
            <person name="Sakano H."/>
            <person name="Salzberg S.L."/>
            <person name="Schwartz J.R."/>
            <person name="Shinn P."/>
            <person name="Southwick A.M."/>
            <person name="Sun H."/>
            <person name="Tallon L.J."/>
            <person name="Tambunga G."/>
            <person name="Toriumi M.J."/>
            <person name="Town C.D."/>
            <person name="Utterback T."/>
            <person name="Van Aken S."/>
            <person name="Vaysberg M."/>
            <person name="Vysotskaia V.S."/>
            <person name="Walker M."/>
            <person name="Wu D."/>
            <person name="Yu G."/>
            <person name="Fraser C.M."/>
            <person name="Venter J.C."/>
            <person name="Davis R.W."/>
        </authorList>
    </citation>
    <scope>NUCLEOTIDE SEQUENCE [LARGE SCALE GENOMIC DNA]</scope>
    <source>
        <strain>cv. Columbia</strain>
    </source>
</reference>
<reference key="2">
    <citation type="journal article" date="2017" name="Plant J.">
        <title>Araport11: a complete reannotation of the Arabidopsis thaliana reference genome.</title>
        <authorList>
            <person name="Cheng C.Y."/>
            <person name="Krishnakumar V."/>
            <person name="Chan A.P."/>
            <person name="Thibaud-Nissen F."/>
            <person name="Schobel S."/>
            <person name="Town C.D."/>
        </authorList>
    </citation>
    <scope>GENOME REANNOTATION</scope>
    <source>
        <strain>cv. Columbia</strain>
    </source>
</reference>
<reference key="3">
    <citation type="journal article" date="2007" name="Plant J.">
        <title>Small cysteine-rich peptides resembling antimicrobial peptides have been under-predicted in plants.</title>
        <authorList>
            <person name="Silverstein K.A.T."/>
            <person name="Moskal W.A. Jr."/>
            <person name="Wu H.C."/>
            <person name="Underwood B.A."/>
            <person name="Graham M.A."/>
            <person name="Town C.D."/>
            <person name="VandenBosch K.A."/>
        </authorList>
    </citation>
    <scope>NUCLEOTIDE SEQUENCE [LARGE SCALE MRNA] OF 24-69</scope>
    <source>
        <strain>cv. Columbia</strain>
    </source>
</reference>
<reference key="4">
    <citation type="journal article" date="2005" name="Plant Physiol.">
        <title>Genome organization of more than 300 defensin-like genes in Arabidopsis.</title>
        <authorList>
            <person name="Silverstein K.A.T."/>
            <person name="Graham M.A."/>
            <person name="Paape T.D."/>
            <person name="VandenBosch K.A."/>
        </authorList>
    </citation>
    <scope>GENE FAMILY</scope>
</reference>
<keyword id="KW-0929">Antimicrobial</keyword>
<keyword id="KW-1015">Disulfide bond</keyword>
<keyword id="KW-0295">Fungicide</keyword>
<keyword id="KW-0611">Plant defense</keyword>
<keyword id="KW-1185">Reference proteome</keyword>
<keyword id="KW-0964">Secreted</keyword>
<keyword id="KW-0732">Signal</keyword>
<gene>
    <name type="ordered locus">At1g51802</name>
    <name type="ORF">F19C24</name>
</gene>
<dbReference type="EMBL" id="AC025294">
    <property type="status" value="NOT_ANNOTATED_CDS"/>
    <property type="molecule type" value="Genomic_DNA"/>
</dbReference>
<dbReference type="EMBL" id="CP002684">
    <property type="status" value="NOT_ANNOTATED_CDS"/>
    <property type="molecule type" value="Genomic_DNA"/>
</dbReference>
<dbReference type="EMBL" id="EF182842">
    <property type="status" value="NOT_ANNOTATED_CDS"/>
    <property type="molecule type" value="mRNA"/>
</dbReference>
<dbReference type="SMR" id="P0CAY5"/>
<dbReference type="Araport" id="AT1G51802"/>
<dbReference type="TAIR" id="AT1G51802"/>
<dbReference type="InParanoid" id="P0CAY5"/>
<dbReference type="Proteomes" id="UP000006548">
    <property type="component" value="Chromosome 1"/>
</dbReference>
<dbReference type="GO" id="GO:0005576">
    <property type="term" value="C:extracellular region"/>
    <property type="evidence" value="ECO:0007669"/>
    <property type="project" value="UniProtKB-SubCell"/>
</dbReference>
<dbReference type="GO" id="GO:0050832">
    <property type="term" value="P:defense response to fungus"/>
    <property type="evidence" value="ECO:0007669"/>
    <property type="project" value="UniProtKB-KW"/>
</dbReference>
<dbReference type="GO" id="GO:0031640">
    <property type="term" value="P:killing of cells of another organism"/>
    <property type="evidence" value="ECO:0007669"/>
    <property type="project" value="UniProtKB-KW"/>
</dbReference>
<name>DF166_ARATH</name>
<feature type="signal peptide" evidence="2">
    <location>
        <begin position="1"/>
        <end position="15"/>
    </location>
</feature>
<feature type="chain" id="PRO_0000379683" description="Defensin-like protein 166">
    <location>
        <begin position="16"/>
        <end position="69"/>
    </location>
</feature>
<feature type="disulfide bond" evidence="1">
    <location>
        <begin position="19"/>
        <end position="68"/>
    </location>
</feature>
<feature type="disulfide bond" evidence="1">
    <location>
        <begin position="24"/>
        <end position="44"/>
    </location>
</feature>
<feature type="disulfide bond" evidence="1">
    <location>
        <begin position="29"/>
        <end position="62"/>
    </location>
</feature>
<feature type="disulfide bond" evidence="1">
    <location>
        <begin position="33"/>
        <end position="64"/>
    </location>
</feature>
<organism>
    <name type="scientific">Arabidopsis thaliana</name>
    <name type="common">Mouse-ear cress</name>
    <dbReference type="NCBI Taxonomy" id="3702"/>
    <lineage>
        <taxon>Eukaryota</taxon>
        <taxon>Viridiplantae</taxon>
        <taxon>Streptophyta</taxon>
        <taxon>Embryophyta</taxon>
        <taxon>Tracheophyta</taxon>
        <taxon>Spermatophyta</taxon>
        <taxon>Magnoliopsida</taxon>
        <taxon>eudicotyledons</taxon>
        <taxon>Gunneridae</taxon>
        <taxon>Pentapetalae</taxon>
        <taxon>rosids</taxon>
        <taxon>malvids</taxon>
        <taxon>Brassicales</taxon>
        <taxon>Brassicaceae</taxon>
        <taxon>Camelineae</taxon>
        <taxon>Arabidopsis</taxon>
    </lineage>
</organism>
<comment type="subcellular location">
    <subcellularLocation>
        <location evidence="1">Secreted</location>
    </subcellularLocation>
</comment>
<comment type="similarity">
    <text evidence="3">Belongs to the DEFL family.</text>
</comment>
<comment type="caution">
    <text evidence="3">Could be the product of a pseudogene.</text>
</comment>
<evidence type="ECO:0000250" key="1"/>
<evidence type="ECO:0000255" key="2"/>
<evidence type="ECO:0000305" key="3"/>
<accession>P0CAY5</accession>